<organism>
    <name type="scientific">Shewanella baltica (strain OS223)</name>
    <dbReference type="NCBI Taxonomy" id="407976"/>
    <lineage>
        <taxon>Bacteria</taxon>
        <taxon>Pseudomonadati</taxon>
        <taxon>Pseudomonadota</taxon>
        <taxon>Gammaproteobacteria</taxon>
        <taxon>Alteromonadales</taxon>
        <taxon>Shewanellaceae</taxon>
        <taxon>Shewanella</taxon>
    </lineage>
</organism>
<sequence>MKRIFLLIATNLAVLLVASIVMSILGVNTSTMGGLLVFAAIFGFGGAFISLAISKWMAKKTMGCEVITTPRDSTERWLVETVARQAKQAGIKMPEVAIYQSPDMNAFATGPSKDNSLVAVSTGLLYGMSQDEIEGVLAHEVSHVANGDMVTLTLIQGVVNTFVIFAARVVAGIINNFVSSNDEEGEGLGMFAYMAVVFVLDMLFGILASIIVAYFSRIREYKADEGAARLAGKGKMIAALERLRQGPESTAMPAQMSAFGINGKRSMAEMMMSHPPLEKRIAALRAS</sequence>
<accession>B8E719</accession>
<name>HTPX_SHEB2</name>
<gene>
    <name evidence="1" type="primary">htpX</name>
    <name type="ordered locus">Sbal223_1787</name>
</gene>
<reference key="1">
    <citation type="submission" date="2008-12" db="EMBL/GenBank/DDBJ databases">
        <title>Complete sequence of chromosome of Shewanella baltica OS223.</title>
        <authorList>
            <consortium name="US DOE Joint Genome Institute"/>
            <person name="Lucas S."/>
            <person name="Copeland A."/>
            <person name="Lapidus A."/>
            <person name="Glavina del Rio T."/>
            <person name="Dalin E."/>
            <person name="Tice H."/>
            <person name="Bruce D."/>
            <person name="Goodwin L."/>
            <person name="Pitluck S."/>
            <person name="Chertkov O."/>
            <person name="Meincke L."/>
            <person name="Brettin T."/>
            <person name="Detter J.C."/>
            <person name="Han C."/>
            <person name="Kuske C.R."/>
            <person name="Larimer F."/>
            <person name="Land M."/>
            <person name="Hauser L."/>
            <person name="Kyrpides N."/>
            <person name="Ovchinnikova G."/>
            <person name="Brettar I."/>
            <person name="Rodrigues J."/>
            <person name="Konstantinidis K."/>
            <person name="Tiedje J."/>
        </authorList>
    </citation>
    <scope>NUCLEOTIDE SEQUENCE [LARGE SCALE GENOMIC DNA]</scope>
    <source>
        <strain>OS223</strain>
    </source>
</reference>
<keyword id="KW-0997">Cell inner membrane</keyword>
<keyword id="KW-1003">Cell membrane</keyword>
<keyword id="KW-0378">Hydrolase</keyword>
<keyword id="KW-0472">Membrane</keyword>
<keyword id="KW-0479">Metal-binding</keyword>
<keyword id="KW-0482">Metalloprotease</keyword>
<keyword id="KW-0645">Protease</keyword>
<keyword id="KW-0812">Transmembrane</keyword>
<keyword id="KW-1133">Transmembrane helix</keyword>
<keyword id="KW-0862">Zinc</keyword>
<feature type="chain" id="PRO_1000124237" description="Protease HtpX">
    <location>
        <begin position="1"/>
        <end position="287"/>
    </location>
</feature>
<feature type="transmembrane region" description="Helical" evidence="1">
    <location>
        <begin position="4"/>
        <end position="24"/>
    </location>
</feature>
<feature type="transmembrane region" description="Helical" evidence="1">
    <location>
        <begin position="33"/>
        <end position="53"/>
    </location>
</feature>
<feature type="transmembrane region" description="Helical" evidence="1">
    <location>
        <begin position="154"/>
        <end position="174"/>
    </location>
</feature>
<feature type="transmembrane region" description="Helical" evidence="1">
    <location>
        <begin position="195"/>
        <end position="215"/>
    </location>
</feature>
<feature type="active site" evidence="1">
    <location>
        <position position="140"/>
    </location>
</feature>
<feature type="binding site" evidence="1">
    <location>
        <position position="139"/>
    </location>
    <ligand>
        <name>Zn(2+)</name>
        <dbReference type="ChEBI" id="CHEBI:29105"/>
        <note>catalytic</note>
    </ligand>
</feature>
<feature type="binding site" evidence="1">
    <location>
        <position position="143"/>
    </location>
    <ligand>
        <name>Zn(2+)</name>
        <dbReference type="ChEBI" id="CHEBI:29105"/>
        <note>catalytic</note>
    </ligand>
</feature>
<feature type="binding site" evidence="1">
    <location>
        <position position="220"/>
    </location>
    <ligand>
        <name>Zn(2+)</name>
        <dbReference type="ChEBI" id="CHEBI:29105"/>
        <note>catalytic</note>
    </ligand>
</feature>
<comment type="cofactor">
    <cofactor evidence="1">
        <name>Zn(2+)</name>
        <dbReference type="ChEBI" id="CHEBI:29105"/>
    </cofactor>
    <text evidence="1">Binds 1 zinc ion per subunit.</text>
</comment>
<comment type="subcellular location">
    <subcellularLocation>
        <location evidence="1">Cell inner membrane</location>
        <topology evidence="1">Multi-pass membrane protein</topology>
    </subcellularLocation>
</comment>
<comment type="similarity">
    <text evidence="1">Belongs to the peptidase M48B family.</text>
</comment>
<dbReference type="EC" id="3.4.24.-" evidence="1"/>
<dbReference type="EMBL" id="CP001252">
    <property type="protein sequence ID" value="ACK46292.1"/>
    <property type="molecule type" value="Genomic_DNA"/>
</dbReference>
<dbReference type="RefSeq" id="WP_006082065.1">
    <property type="nucleotide sequence ID" value="NC_011663.1"/>
</dbReference>
<dbReference type="MEROPS" id="M48.002"/>
<dbReference type="GeneID" id="11772760"/>
<dbReference type="KEGG" id="sbp:Sbal223_1787"/>
<dbReference type="HOGENOM" id="CLU_042266_1_0_6"/>
<dbReference type="Proteomes" id="UP000002507">
    <property type="component" value="Chromosome"/>
</dbReference>
<dbReference type="GO" id="GO:0005886">
    <property type="term" value="C:plasma membrane"/>
    <property type="evidence" value="ECO:0007669"/>
    <property type="project" value="UniProtKB-SubCell"/>
</dbReference>
<dbReference type="GO" id="GO:0004222">
    <property type="term" value="F:metalloendopeptidase activity"/>
    <property type="evidence" value="ECO:0007669"/>
    <property type="project" value="UniProtKB-UniRule"/>
</dbReference>
<dbReference type="GO" id="GO:0008270">
    <property type="term" value="F:zinc ion binding"/>
    <property type="evidence" value="ECO:0007669"/>
    <property type="project" value="UniProtKB-UniRule"/>
</dbReference>
<dbReference type="GO" id="GO:0006508">
    <property type="term" value="P:proteolysis"/>
    <property type="evidence" value="ECO:0007669"/>
    <property type="project" value="UniProtKB-KW"/>
</dbReference>
<dbReference type="CDD" id="cd07335">
    <property type="entry name" value="M48B_HtpX_like"/>
    <property type="match status" value="1"/>
</dbReference>
<dbReference type="FunFam" id="3.30.2010.10:FF:000001">
    <property type="entry name" value="Protease HtpX"/>
    <property type="match status" value="1"/>
</dbReference>
<dbReference type="Gene3D" id="3.30.2010.10">
    <property type="entry name" value="Metalloproteases ('zincins'), catalytic domain"/>
    <property type="match status" value="1"/>
</dbReference>
<dbReference type="HAMAP" id="MF_00188">
    <property type="entry name" value="Pept_M48_protease_HtpX"/>
    <property type="match status" value="1"/>
</dbReference>
<dbReference type="InterPro" id="IPR050083">
    <property type="entry name" value="HtpX_protease"/>
</dbReference>
<dbReference type="InterPro" id="IPR022919">
    <property type="entry name" value="Pept_M48_protease_HtpX"/>
</dbReference>
<dbReference type="InterPro" id="IPR001915">
    <property type="entry name" value="Peptidase_M48"/>
</dbReference>
<dbReference type="NCBIfam" id="NF003965">
    <property type="entry name" value="PRK05457.1"/>
    <property type="match status" value="1"/>
</dbReference>
<dbReference type="PANTHER" id="PTHR43221">
    <property type="entry name" value="PROTEASE HTPX"/>
    <property type="match status" value="1"/>
</dbReference>
<dbReference type="PANTHER" id="PTHR43221:SF1">
    <property type="entry name" value="PROTEASE HTPX"/>
    <property type="match status" value="1"/>
</dbReference>
<dbReference type="Pfam" id="PF01435">
    <property type="entry name" value="Peptidase_M48"/>
    <property type="match status" value="1"/>
</dbReference>
<proteinExistence type="inferred from homology"/>
<evidence type="ECO:0000255" key="1">
    <source>
        <dbReference type="HAMAP-Rule" id="MF_00188"/>
    </source>
</evidence>
<protein>
    <recommendedName>
        <fullName evidence="1">Protease HtpX</fullName>
        <ecNumber evidence="1">3.4.24.-</ecNumber>
    </recommendedName>
    <alternativeName>
        <fullName evidence="1">Heat shock protein HtpX</fullName>
    </alternativeName>
</protein>